<accession>Q9L7A3</accession>
<accession>Q7BY46</accession>
<dbReference type="EC" id="2.7.7.72" evidence="1"/>
<dbReference type="EC" id="3.1.3.-" evidence="1"/>
<dbReference type="EC" id="3.1.4.-" evidence="1"/>
<dbReference type="EMBL" id="AF224467">
    <property type="protein sequence ID" value="AAF28362.1"/>
    <property type="molecule type" value="Genomic_DNA"/>
</dbReference>
<dbReference type="EMBL" id="AE017143">
    <property type="protein sequence ID" value="AAP95957.1"/>
    <property type="molecule type" value="Genomic_DNA"/>
</dbReference>
<dbReference type="RefSeq" id="WP_010945006.1">
    <property type="nucleotide sequence ID" value="NC_002940.2"/>
</dbReference>
<dbReference type="SMR" id="Q9L7A3"/>
<dbReference type="STRING" id="233412.HD_1091"/>
<dbReference type="DNASU" id="1491020"/>
<dbReference type="KEGG" id="hdu:HD_1091"/>
<dbReference type="eggNOG" id="COG0617">
    <property type="taxonomic scope" value="Bacteria"/>
</dbReference>
<dbReference type="HOGENOM" id="CLU_015961_1_1_6"/>
<dbReference type="OrthoDB" id="9805698at2"/>
<dbReference type="Proteomes" id="UP000001022">
    <property type="component" value="Chromosome"/>
</dbReference>
<dbReference type="GO" id="GO:0005524">
    <property type="term" value="F:ATP binding"/>
    <property type="evidence" value="ECO:0007669"/>
    <property type="project" value="UniProtKB-UniRule"/>
</dbReference>
<dbReference type="GO" id="GO:0004810">
    <property type="term" value="F:CCA tRNA nucleotidyltransferase activity"/>
    <property type="evidence" value="ECO:0007669"/>
    <property type="project" value="UniProtKB-UniRule"/>
</dbReference>
<dbReference type="GO" id="GO:0004112">
    <property type="term" value="F:cyclic-nucleotide phosphodiesterase activity"/>
    <property type="evidence" value="ECO:0007669"/>
    <property type="project" value="UniProtKB-UniRule"/>
</dbReference>
<dbReference type="GO" id="GO:0000287">
    <property type="term" value="F:magnesium ion binding"/>
    <property type="evidence" value="ECO:0007669"/>
    <property type="project" value="UniProtKB-UniRule"/>
</dbReference>
<dbReference type="GO" id="GO:0016791">
    <property type="term" value="F:phosphatase activity"/>
    <property type="evidence" value="ECO:0007669"/>
    <property type="project" value="UniProtKB-UniRule"/>
</dbReference>
<dbReference type="GO" id="GO:0000049">
    <property type="term" value="F:tRNA binding"/>
    <property type="evidence" value="ECO:0007669"/>
    <property type="project" value="UniProtKB-UniRule"/>
</dbReference>
<dbReference type="GO" id="GO:0042245">
    <property type="term" value="P:RNA repair"/>
    <property type="evidence" value="ECO:0007669"/>
    <property type="project" value="UniProtKB-KW"/>
</dbReference>
<dbReference type="GO" id="GO:0001680">
    <property type="term" value="P:tRNA 3'-terminal CCA addition"/>
    <property type="evidence" value="ECO:0007669"/>
    <property type="project" value="UniProtKB-UniRule"/>
</dbReference>
<dbReference type="CDD" id="cd00077">
    <property type="entry name" value="HDc"/>
    <property type="match status" value="1"/>
</dbReference>
<dbReference type="CDD" id="cd05398">
    <property type="entry name" value="NT_ClassII-CCAase"/>
    <property type="match status" value="1"/>
</dbReference>
<dbReference type="Gene3D" id="3.30.460.10">
    <property type="entry name" value="Beta Polymerase, domain 2"/>
    <property type="match status" value="1"/>
</dbReference>
<dbReference type="Gene3D" id="1.10.3090.10">
    <property type="entry name" value="cca-adding enzyme, domain 2"/>
    <property type="match status" value="1"/>
</dbReference>
<dbReference type="HAMAP" id="MF_01261">
    <property type="entry name" value="CCA_bact_type1"/>
    <property type="match status" value="1"/>
</dbReference>
<dbReference type="HAMAP" id="MF_01262">
    <property type="entry name" value="CCA_bact_type2"/>
    <property type="match status" value="1"/>
</dbReference>
<dbReference type="InterPro" id="IPR012006">
    <property type="entry name" value="CCA_bact"/>
</dbReference>
<dbReference type="InterPro" id="IPR003607">
    <property type="entry name" value="HD/PDEase_dom"/>
</dbReference>
<dbReference type="InterPro" id="IPR006674">
    <property type="entry name" value="HD_domain"/>
</dbReference>
<dbReference type="InterPro" id="IPR043519">
    <property type="entry name" value="NT_sf"/>
</dbReference>
<dbReference type="InterPro" id="IPR002646">
    <property type="entry name" value="PolA_pol_head_dom"/>
</dbReference>
<dbReference type="InterPro" id="IPR032828">
    <property type="entry name" value="PolyA_RNA-bd"/>
</dbReference>
<dbReference type="InterPro" id="IPR050124">
    <property type="entry name" value="tRNA_CCA-adding_enzyme"/>
</dbReference>
<dbReference type="NCBIfam" id="NF008137">
    <property type="entry name" value="PRK10885.1"/>
    <property type="match status" value="1"/>
</dbReference>
<dbReference type="PANTHER" id="PTHR47545">
    <property type="entry name" value="MULTIFUNCTIONAL CCA PROTEIN"/>
    <property type="match status" value="1"/>
</dbReference>
<dbReference type="PANTHER" id="PTHR47545:SF1">
    <property type="entry name" value="MULTIFUNCTIONAL CCA PROTEIN"/>
    <property type="match status" value="1"/>
</dbReference>
<dbReference type="Pfam" id="PF01966">
    <property type="entry name" value="HD"/>
    <property type="match status" value="1"/>
</dbReference>
<dbReference type="Pfam" id="PF01743">
    <property type="entry name" value="PolyA_pol"/>
    <property type="match status" value="1"/>
</dbReference>
<dbReference type="Pfam" id="PF12627">
    <property type="entry name" value="PolyA_pol_RNAbd"/>
    <property type="match status" value="1"/>
</dbReference>
<dbReference type="PIRSF" id="PIRSF000813">
    <property type="entry name" value="CCA_bact"/>
    <property type="match status" value="1"/>
</dbReference>
<dbReference type="SUPFAM" id="SSF81301">
    <property type="entry name" value="Nucleotidyltransferase"/>
    <property type="match status" value="1"/>
</dbReference>
<dbReference type="SUPFAM" id="SSF81891">
    <property type="entry name" value="Poly A polymerase C-terminal region-like"/>
    <property type="match status" value="1"/>
</dbReference>
<dbReference type="PROSITE" id="PS51831">
    <property type="entry name" value="HD"/>
    <property type="match status" value="1"/>
</dbReference>
<reference key="1">
    <citation type="submission" date="2000-01" db="EMBL/GenBank/DDBJ databases">
        <authorList>
            <person name="Wang J."/>
            <person name="Hanson E."/>
            <person name="Munson R.S. Jr."/>
        </authorList>
    </citation>
    <scope>NUCLEOTIDE SEQUENCE [GENOMIC DNA]</scope>
</reference>
<reference key="2">
    <citation type="submission" date="2003-06" db="EMBL/GenBank/DDBJ databases">
        <title>The complete genome sequence of Haemophilus ducreyi.</title>
        <authorList>
            <person name="Munson R.S. Jr."/>
            <person name="Ray W.C."/>
            <person name="Mahairas G."/>
            <person name="Sabo P."/>
            <person name="Mungur R."/>
            <person name="Johnson L."/>
            <person name="Nguyen D."/>
            <person name="Wang J."/>
            <person name="Forst C."/>
            <person name="Hood L."/>
        </authorList>
    </citation>
    <scope>NUCLEOTIDE SEQUENCE [LARGE SCALE GENOMIC DNA]</scope>
    <source>
        <strain>35000HP / ATCC 700724</strain>
    </source>
</reference>
<comment type="function">
    <text evidence="1">Catalyzes the addition and repair of the essential 3'-terminal CCA sequence in tRNAs without using a nucleic acid template. Adds these three nucleotides in the order of C, C, and A to the tRNA nucleotide-73, using CTP and ATP as substrates and producing inorganic pyrophosphate. tRNA 3'-terminal CCA addition is required both for tRNA processing and repair. Also involved in tRNA surveillance by mediating tandem CCA addition to generate a CCACCA at the 3' terminus of unstable tRNAs. While stable tRNAs receive only 3'-terminal CCA, unstable tRNAs are marked with CCACCA and rapidly degraded.</text>
</comment>
<comment type="catalytic activity">
    <reaction evidence="1">
        <text>a tRNA precursor + 2 CTP + ATP = a tRNA with a 3' CCA end + 3 diphosphate</text>
        <dbReference type="Rhea" id="RHEA:14433"/>
        <dbReference type="Rhea" id="RHEA-COMP:10465"/>
        <dbReference type="Rhea" id="RHEA-COMP:10468"/>
        <dbReference type="ChEBI" id="CHEBI:30616"/>
        <dbReference type="ChEBI" id="CHEBI:33019"/>
        <dbReference type="ChEBI" id="CHEBI:37563"/>
        <dbReference type="ChEBI" id="CHEBI:74896"/>
        <dbReference type="ChEBI" id="CHEBI:83071"/>
        <dbReference type="EC" id="2.7.7.72"/>
    </reaction>
</comment>
<comment type="catalytic activity">
    <reaction evidence="1">
        <text>a tRNA with a 3' CCA end + 2 CTP + ATP = a tRNA with a 3' CCACCA end + 3 diphosphate</text>
        <dbReference type="Rhea" id="RHEA:76235"/>
        <dbReference type="Rhea" id="RHEA-COMP:10468"/>
        <dbReference type="Rhea" id="RHEA-COMP:18655"/>
        <dbReference type="ChEBI" id="CHEBI:30616"/>
        <dbReference type="ChEBI" id="CHEBI:33019"/>
        <dbReference type="ChEBI" id="CHEBI:37563"/>
        <dbReference type="ChEBI" id="CHEBI:83071"/>
        <dbReference type="ChEBI" id="CHEBI:195187"/>
    </reaction>
    <physiologicalReaction direction="left-to-right" evidence="1">
        <dbReference type="Rhea" id="RHEA:76236"/>
    </physiologicalReaction>
</comment>
<comment type="cofactor">
    <cofactor evidence="1">
        <name>Mg(2+)</name>
        <dbReference type="ChEBI" id="CHEBI:18420"/>
    </cofactor>
    <text evidence="1">Magnesium is required for nucleotidyltransferase activity.</text>
</comment>
<comment type="cofactor">
    <cofactor evidence="1">
        <name>Ni(2+)</name>
        <dbReference type="ChEBI" id="CHEBI:49786"/>
    </cofactor>
    <text evidence="1">Nickel for phosphatase activity.</text>
</comment>
<comment type="subunit">
    <text evidence="1">Monomer. Can also form homodimers and oligomers.</text>
</comment>
<comment type="domain">
    <text evidence="1">Comprises two domains: an N-terminal domain containing the nucleotidyltransferase activity and a C-terminal HD domain associated with both phosphodiesterase and phosphatase activities.</text>
</comment>
<comment type="miscellaneous">
    <text evidence="1">A single active site specifically recognizes both ATP and CTP and is responsible for their addition.</text>
</comment>
<comment type="similarity">
    <text evidence="1">Belongs to the tRNA nucleotidyltransferase/poly(A) polymerase family. Bacterial CCA-adding enzyme type 1 subfamily.</text>
</comment>
<name>CCA_HAEDU</name>
<gene>
    <name evidence="1" type="primary">cca</name>
    <name type="ordered locus">HD_1091</name>
</gene>
<organism>
    <name type="scientific">Haemophilus ducreyi (strain 35000HP / ATCC 700724)</name>
    <dbReference type="NCBI Taxonomy" id="233412"/>
    <lineage>
        <taxon>Bacteria</taxon>
        <taxon>Pseudomonadati</taxon>
        <taxon>Pseudomonadota</taxon>
        <taxon>Gammaproteobacteria</taxon>
        <taxon>Pasteurellales</taxon>
        <taxon>Pasteurellaceae</taxon>
        <taxon>Haemophilus</taxon>
    </lineage>
</organism>
<sequence length="412" mass="46685">MQIYLVGGAVRDQLLNLPIKDRDFLVVGATAKELINQGYQQVGADFPVFLHPVTQQEYALARQERKSGTGYTGFVCDFSPNVTLEQDLIRRDLTINAMAQDLTSGQIFDPFGGKTDLANRLLRHISDAFAEDPLRVLRVARFAARFHHLGFSIAEQTLELMQKMTACGELNHLTAERIWRETEKALHTESPHIYFQVLRKVNALAILFPEIDQLFGQIQSVKYHLETDRGQHTLLALQQAKLLVKQAHNPTALLWAVLCHDLGKDLISAEMLPHHYQPNVTGIQLTHQLADRLKVPTAVKELALLVNKYHTNCHKIAELDSERVLELFNQLDVWRKPQRLDDFLLACEADARARLGAEYCSYPQATLAIDYFNAANAVNVQAIIADGFKKQAIRDELNNRRINIIKQIKNAI</sequence>
<evidence type="ECO:0000255" key="1">
    <source>
        <dbReference type="HAMAP-Rule" id="MF_01261"/>
    </source>
</evidence>
<keyword id="KW-0067">ATP-binding</keyword>
<keyword id="KW-0378">Hydrolase</keyword>
<keyword id="KW-0460">Magnesium</keyword>
<keyword id="KW-0479">Metal-binding</keyword>
<keyword id="KW-0511">Multifunctional enzyme</keyword>
<keyword id="KW-0533">Nickel</keyword>
<keyword id="KW-0547">Nucleotide-binding</keyword>
<keyword id="KW-0548">Nucleotidyltransferase</keyword>
<keyword id="KW-1185">Reference proteome</keyword>
<keyword id="KW-0692">RNA repair</keyword>
<keyword id="KW-0694">RNA-binding</keyword>
<keyword id="KW-0808">Transferase</keyword>
<keyword id="KW-0819">tRNA processing</keyword>
<feature type="chain" id="PRO_0000138979" description="Multifunctional CCA protein">
    <location>
        <begin position="1"/>
        <end position="412"/>
    </location>
</feature>
<feature type="domain" description="HD" evidence="1">
    <location>
        <begin position="229"/>
        <end position="334"/>
    </location>
</feature>
<feature type="binding site" evidence="1">
    <location>
        <position position="8"/>
    </location>
    <ligand>
        <name>ATP</name>
        <dbReference type="ChEBI" id="CHEBI:30616"/>
    </ligand>
</feature>
<feature type="binding site" evidence="1">
    <location>
        <position position="8"/>
    </location>
    <ligand>
        <name>CTP</name>
        <dbReference type="ChEBI" id="CHEBI:37563"/>
    </ligand>
</feature>
<feature type="binding site" evidence="1">
    <location>
        <position position="11"/>
    </location>
    <ligand>
        <name>ATP</name>
        <dbReference type="ChEBI" id="CHEBI:30616"/>
    </ligand>
</feature>
<feature type="binding site" evidence="1">
    <location>
        <position position="11"/>
    </location>
    <ligand>
        <name>CTP</name>
        <dbReference type="ChEBI" id="CHEBI:37563"/>
    </ligand>
</feature>
<feature type="binding site" evidence="1">
    <location>
        <position position="21"/>
    </location>
    <ligand>
        <name>Mg(2+)</name>
        <dbReference type="ChEBI" id="CHEBI:18420"/>
    </ligand>
</feature>
<feature type="binding site" evidence="1">
    <location>
        <position position="23"/>
    </location>
    <ligand>
        <name>Mg(2+)</name>
        <dbReference type="ChEBI" id="CHEBI:18420"/>
    </ligand>
</feature>
<feature type="binding site" evidence="1">
    <location>
        <position position="91"/>
    </location>
    <ligand>
        <name>ATP</name>
        <dbReference type="ChEBI" id="CHEBI:30616"/>
    </ligand>
</feature>
<feature type="binding site" evidence="1">
    <location>
        <position position="91"/>
    </location>
    <ligand>
        <name>CTP</name>
        <dbReference type="ChEBI" id="CHEBI:37563"/>
    </ligand>
</feature>
<feature type="binding site" evidence="1">
    <location>
        <position position="138"/>
    </location>
    <ligand>
        <name>ATP</name>
        <dbReference type="ChEBI" id="CHEBI:30616"/>
    </ligand>
</feature>
<feature type="binding site" evidence="1">
    <location>
        <position position="138"/>
    </location>
    <ligand>
        <name>CTP</name>
        <dbReference type="ChEBI" id="CHEBI:37563"/>
    </ligand>
</feature>
<feature type="binding site" evidence="1">
    <location>
        <position position="141"/>
    </location>
    <ligand>
        <name>ATP</name>
        <dbReference type="ChEBI" id="CHEBI:30616"/>
    </ligand>
</feature>
<feature type="binding site" evidence="1">
    <location>
        <position position="141"/>
    </location>
    <ligand>
        <name>CTP</name>
        <dbReference type="ChEBI" id="CHEBI:37563"/>
    </ligand>
</feature>
<protein>
    <recommendedName>
        <fullName evidence="1">Multifunctional CCA protein</fullName>
    </recommendedName>
    <domain>
        <recommendedName>
            <fullName evidence="1">CCA-adding enzyme</fullName>
            <ecNumber evidence="1">2.7.7.72</ecNumber>
        </recommendedName>
        <alternativeName>
            <fullName evidence="1">CCA tRNA nucleotidyltransferase</fullName>
        </alternativeName>
        <alternativeName>
            <fullName evidence="1">tRNA CCA-pyrophosphorylase</fullName>
        </alternativeName>
        <alternativeName>
            <fullName evidence="1">tRNA adenylyl-/cytidylyl-transferase</fullName>
        </alternativeName>
        <alternativeName>
            <fullName evidence="1">tRNA nucleotidyltransferase</fullName>
        </alternativeName>
        <alternativeName>
            <fullName evidence="1">tRNA-NT</fullName>
        </alternativeName>
    </domain>
    <domain>
        <recommendedName>
            <fullName evidence="1">2'-nucleotidase</fullName>
            <ecNumber evidence="1">3.1.3.-</ecNumber>
        </recommendedName>
    </domain>
    <domain>
        <recommendedName>
            <fullName evidence="1">2',3'-cyclic phosphodiesterase</fullName>
            <ecNumber evidence="1">3.1.4.-</ecNumber>
        </recommendedName>
    </domain>
    <domain>
        <recommendedName>
            <fullName evidence="1">Phosphatase</fullName>
            <ecNumber evidence="1">3.1.3.-</ecNumber>
        </recommendedName>
    </domain>
</protein>
<proteinExistence type="inferred from homology"/>